<accession>A3P104</accession>
<proteinExistence type="inferred from homology"/>
<reference key="1">
    <citation type="journal article" date="2010" name="Genome Biol. Evol.">
        <title>Continuing evolution of Burkholderia mallei through genome reduction and large-scale rearrangements.</title>
        <authorList>
            <person name="Losada L."/>
            <person name="Ronning C.M."/>
            <person name="DeShazer D."/>
            <person name="Woods D."/>
            <person name="Fedorova N."/>
            <person name="Kim H.S."/>
            <person name="Shabalina S.A."/>
            <person name="Pearson T.R."/>
            <person name="Brinkac L."/>
            <person name="Tan P."/>
            <person name="Nandi T."/>
            <person name="Crabtree J."/>
            <person name="Badger J."/>
            <person name="Beckstrom-Sternberg S."/>
            <person name="Saqib M."/>
            <person name="Schutzer S.E."/>
            <person name="Keim P."/>
            <person name="Nierman W.C."/>
        </authorList>
    </citation>
    <scope>NUCLEOTIDE SEQUENCE [LARGE SCALE GENOMIC DNA]</scope>
    <source>
        <strain>1106a</strain>
    </source>
</reference>
<evidence type="ECO:0000255" key="1">
    <source>
        <dbReference type="HAMAP-Rule" id="MF_00129"/>
    </source>
</evidence>
<evidence type="ECO:0000256" key="2">
    <source>
        <dbReference type="SAM" id="MobiDB-lite"/>
    </source>
</evidence>
<gene>
    <name evidence="1" type="primary">mnmG</name>
    <name evidence="1" type="synonym">gidA</name>
    <name type="ordered locus">BURPS1106A_4056</name>
</gene>
<name>MNMG_BURP0</name>
<dbReference type="EMBL" id="CP000572">
    <property type="protein sequence ID" value="ABN88815.1"/>
    <property type="molecule type" value="Genomic_DNA"/>
</dbReference>
<dbReference type="RefSeq" id="WP_004195816.1">
    <property type="nucleotide sequence ID" value="NC_009076.1"/>
</dbReference>
<dbReference type="SMR" id="A3P104"/>
<dbReference type="GeneID" id="93062036"/>
<dbReference type="KEGG" id="bpl:BURPS1106A_4056"/>
<dbReference type="HOGENOM" id="CLU_007831_2_2_4"/>
<dbReference type="Proteomes" id="UP000006738">
    <property type="component" value="Chromosome I"/>
</dbReference>
<dbReference type="GO" id="GO:0005829">
    <property type="term" value="C:cytosol"/>
    <property type="evidence" value="ECO:0007669"/>
    <property type="project" value="TreeGrafter"/>
</dbReference>
<dbReference type="GO" id="GO:0050660">
    <property type="term" value="F:flavin adenine dinucleotide binding"/>
    <property type="evidence" value="ECO:0007669"/>
    <property type="project" value="UniProtKB-UniRule"/>
</dbReference>
<dbReference type="GO" id="GO:0030488">
    <property type="term" value="P:tRNA methylation"/>
    <property type="evidence" value="ECO:0007669"/>
    <property type="project" value="TreeGrafter"/>
</dbReference>
<dbReference type="GO" id="GO:0002098">
    <property type="term" value="P:tRNA wobble uridine modification"/>
    <property type="evidence" value="ECO:0007669"/>
    <property type="project" value="InterPro"/>
</dbReference>
<dbReference type="FunFam" id="1.10.10.1800:FF:000001">
    <property type="entry name" value="tRNA uridine 5-carboxymethylaminomethyl modification enzyme MnmG"/>
    <property type="match status" value="1"/>
</dbReference>
<dbReference type="FunFam" id="1.10.150.570:FF:000001">
    <property type="entry name" value="tRNA uridine 5-carboxymethylaminomethyl modification enzyme MnmG"/>
    <property type="match status" value="1"/>
</dbReference>
<dbReference type="FunFam" id="3.50.50.60:FF:000002">
    <property type="entry name" value="tRNA uridine 5-carboxymethylaminomethyl modification enzyme MnmG"/>
    <property type="match status" value="1"/>
</dbReference>
<dbReference type="FunFam" id="3.50.50.60:FF:000010">
    <property type="entry name" value="tRNA uridine 5-carboxymethylaminomethyl modification enzyme MnmG"/>
    <property type="match status" value="1"/>
</dbReference>
<dbReference type="Gene3D" id="3.50.50.60">
    <property type="entry name" value="FAD/NAD(P)-binding domain"/>
    <property type="match status" value="2"/>
</dbReference>
<dbReference type="Gene3D" id="1.10.150.570">
    <property type="entry name" value="GidA associated domain, C-terminal subdomain"/>
    <property type="match status" value="1"/>
</dbReference>
<dbReference type="Gene3D" id="1.10.10.1800">
    <property type="entry name" value="tRNA uridine 5-carboxymethylaminomethyl modification enzyme MnmG/GidA"/>
    <property type="match status" value="1"/>
</dbReference>
<dbReference type="HAMAP" id="MF_00129">
    <property type="entry name" value="MnmG_GidA"/>
    <property type="match status" value="1"/>
</dbReference>
<dbReference type="InterPro" id="IPR036188">
    <property type="entry name" value="FAD/NAD-bd_sf"/>
</dbReference>
<dbReference type="InterPro" id="IPR049312">
    <property type="entry name" value="GIDA_C_N"/>
</dbReference>
<dbReference type="InterPro" id="IPR004416">
    <property type="entry name" value="MnmG"/>
</dbReference>
<dbReference type="InterPro" id="IPR002218">
    <property type="entry name" value="MnmG-rel"/>
</dbReference>
<dbReference type="InterPro" id="IPR020595">
    <property type="entry name" value="MnmG-rel_CS"/>
</dbReference>
<dbReference type="InterPro" id="IPR026904">
    <property type="entry name" value="MnmG_C"/>
</dbReference>
<dbReference type="InterPro" id="IPR047001">
    <property type="entry name" value="MnmG_C_subdom"/>
</dbReference>
<dbReference type="InterPro" id="IPR044920">
    <property type="entry name" value="MnmG_C_subdom_sf"/>
</dbReference>
<dbReference type="InterPro" id="IPR040131">
    <property type="entry name" value="MnmG_N"/>
</dbReference>
<dbReference type="NCBIfam" id="TIGR00136">
    <property type="entry name" value="mnmG_gidA"/>
    <property type="match status" value="1"/>
</dbReference>
<dbReference type="PANTHER" id="PTHR11806">
    <property type="entry name" value="GLUCOSE INHIBITED DIVISION PROTEIN A"/>
    <property type="match status" value="1"/>
</dbReference>
<dbReference type="PANTHER" id="PTHR11806:SF0">
    <property type="entry name" value="PROTEIN MTO1 HOMOLOG, MITOCHONDRIAL"/>
    <property type="match status" value="1"/>
</dbReference>
<dbReference type="Pfam" id="PF01134">
    <property type="entry name" value="GIDA"/>
    <property type="match status" value="1"/>
</dbReference>
<dbReference type="Pfam" id="PF21680">
    <property type="entry name" value="GIDA_C_1st"/>
    <property type="match status" value="1"/>
</dbReference>
<dbReference type="Pfam" id="PF13932">
    <property type="entry name" value="SAM_GIDA_C"/>
    <property type="match status" value="1"/>
</dbReference>
<dbReference type="SMART" id="SM01228">
    <property type="entry name" value="GIDA_assoc_3"/>
    <property type="match status" value="1"/>
</dbReference>
<dbReference type="SUPFAM" id="SSF51905">
    <property type="entry name" value="FAD/NAD(P)-binding domain"/>
    <property type="match status" value="1"/>
</dbReference>
<dbReference type="PROSITE" id="PS01280">
    <property type="entry name" value="GIDA_1"/>
    <property type="match status" value="1"/>
</dbReference>
<dbReference type="PROSITE" id="PS01281">
    <property type="entry name" value="GIDA_2"/>
    <property type="match status" value="1"/>
</dbReference>
<keyword id="KW-0963">Cytoplasm</keyword>
<keyword id="KW-0274">FAD</keyword>
<keyword id="KW-0285">Flavoprotein</keyword>
<keyword id="KW-0520">NAD</keyword>
<keyword id="KW-0819">tRNA processing</keyword>
<protein>
    <recommendedName>
        <fullName evidence="1">tRNA uridine 5-carboxymethylaminomethyl modification enzyme MnmG</fullName>
    </recommendedName>
    <alternativeName>
        <fullName evidence="1">Glucose-inhibited division protein A</fullName>
    </alternativeName>
</protein>
<feature type="chain" id="PRO_1000016566" description="tRNA uridine 5-carboxymethylaminomethyl modification enzyme MnmG">
    <location>
        <begin position="1"/>
        <end position="657"/>
    </location>
</feature>
<feature type="region of interest" description="Disordered" evidence="2">
    <location>
        <begin position="636"/>
        <end position="657"/>
    </location>
</feature>
<feature type="binding site" evidence="1">
    <location>
        <begin position="13"/>
        <end position="18"/>
    </location>
    <ligand>
        <name>FAD</name>
        <dbReference type="ChEBI" id="CHEBI:57692"/>
    </ligand>
</feature>
<feature type="binding site" evidence="1">
    <location>
        <begin position="274"/>
        <end position="288"/>
    </location>
    <ligand>
        <name>NAD(+)</name>
        <dbReference type="ChEBI" id="CHEBI:57540"/>
    </ligand>
</feature>
<comment type="function">
    <text evidence="1">NAD-binding protein involved in the addition of a carboxymethylaminomethyl (cmnm) group at the wobble position (U34) of certain tRNAs, forming tRNA-cmnm(5)s(2)U34.</text>
</comment>
<comment type="cofactor">
    <cofactor evidence="1">
        <name>FAD</name>
        <dbReference type="ChEBI" id="CHEBI:57692"/>
    </cofactor>
</comment>
<comment type="subunit">
    <text evidence="1">Homodimer. Heterotetramer of two MnmE and two MnmG subunits.</text>
</comment>
<comment type="subcellular location">
    <subcellularLocation>
        <location evidence="1">Cytoplasm</location>
    </subcellularLocation>
</comment>
<comment type="similarity">
    <text evidence="1">Belongs to the MnmG family.</text>
</comment>
<sequence>MLYPTEFDVIVVGGGHAGTEAALASARMGAKTLLLTHNIETLGQMSCNPSIGGIGKGHLVKEVDALGGAMAAATDEGGIQFRILNSSKGPAVRATRAQADRVLYKQAIRRRLENQPNLWLFQQAVDDLMVEGDRVVGAVTQVGVRFRARAVVLTAGTFLDGKIHVGLNHYTGGRAGDPAAVSLSSRLKELNLPQGRLKTGTPPRIDGRTIDFSKLDEQPGDLDPIPVFSFLGRAEQHPQQLPCWVTHTNERTHDIIRSGLDRSPMYTGVIEGVGPRYCPSIEDKIHRFASKDSHQIFLEPEGLTTNEFYPNGISTSLPFDVQLALVHSMRGLEQAHILRPGYAIEYDYFDPRALKSSLETKAIGGLFFAGQINGTTGYEEAAAQGLLAGINAGRYAQEKDAWCPRRDQAYLGVLVDDLVTRGVSEPYRMFTSRAEYRLSLREDNADMRLTEIGRELGVVDDVRWDAFNRKRDAVSRETERLRTTWVTPKTLPADEATALLGKPIDHEYSLAELLRRPGVSYDGVCGLRGGECGPSEPLAEDELLLAQIKEQIEIGIKYQGYIERQAGEIERNGANENTRLPDGIDYTEVRGLSFEVSQKLNQFRPETIGQASRISGMTPAAISLLMVHLKKRGLGRRKGADSVPGADVQADNTAAQQ</sequence>
<organism>
    <name type="scientific">Burkholderia pseudomallei (strain 1106a)</name>
    <dbReference type="NCBI Taxonomy" id="357348"/>
    <lineage>
        <taxon>Bacteria</taxon>
        <taxon>Pseudomonadati</taxon>
        <taxon>Pseudomonadota</taxon>
        <taxon>Betaproteobacteria</taxon>
        <taxon>Burkholderiales</taxon>
        <taxon>Burkholderiaceae</taxon>
        <taxon>Burkholderia</taxon>
        <taxon>pseudomallei group</taxon>
    </lineage>
</organism>